<keyword id="KW-0067">ATP-binding</keyword>
<keyword id="KW-0238">DNA-binding</keyword>
<keyword id="KW-0479">Metal-binding</keyword>
<keyword id="KW-0547">Nucleotide-binding</keyword>
<keyword id="KW-0678">Repressor</keyword>
<keyword id="KW-0804">Transcription</keyword>
<keyword id="KW-0805">Transcription regulation</keyword>
<keyword id="KW-0862">Zinc</keyword>
<keyword id="KW-0863">Zinc-finger</keyword>
<organism>
    <name type="scientific">Thermotoga neapolitana (strain ATCC 49049 / DSM 4359 / NBRC 107923 / NS-E)</name>
    <dbReference type="NCBI Taxonomy" id="309803"/>
    <lineage>
        <taxon>Bacteria</taxon>
        <taxon>Thermotogati</taxon>
        <taxon>Thermotogota</taxon>
        <taxon>Thermotogae</taxon>
        <taxon>Thermotogales</taxon>
        <taxon>Thermotogaceae</taxon>
        <taxon>Thermotoga</taxon>
    </lineage>
</organism>
<sequence>MRCPFCGSMDTRVLDSRPTLDGAAIRRRRECISCGRRFTTYERYEEAPVLVIKKDGRREKFDRNKIKNGMIKACEKRPVTYDQIEEAVNRICLKLREEGLFEVETKKIGELVMEELKKLDQVAYVRFASVYRDFREVDQFLEIVKELKREKEGEGK</sequence>
<name>NRDR_THENN</name>
<proteinExistence type="inferred from homology"/>
<gene>
    <name evidence="1" type="primary">nrdR</name>
    <name type="ordered locus">CTN_0895</name>
</gene>
<comment type="function">
    <text evidence="1">Negatively regulates transcription of bacterial ribonucleotide reductase nrd genes and operons by binding to NrdR-boxes.</text>
</comment>
<comment type="cofactor">
    <cofactor evidence="1">
        <name>Zn(2+)</name>
        <dbReference type="ChEBI" id="CHEBI:29105"/>
    </cofactor>
    <text evidence="1">Binds 1 zinc ion.</text>
</comment>
<comment type="similarity">
    <text evidence="1">Belongs to the NrdR family.</text>
</comment>
<dbReference type="EMBL" id="CP000916">
    <property type="protein sequence ID" value="ACM23071.1"/>
    <property type="molecule type" value="Genomic_DNA"/>
</dbReference>
<dbReference type="RefSeq" id="WP_015919388.1">
    <property type="nucleotide sequence ID" value="NC_011978.1"/>
</dbReference>
<dbReference type="SMR" id="B9K7Y8"/>
<dbReference type="STRING" id="309803.CTN_0895"/>
<dbReference type="KEGG" id="tna:CTN_0895"/>
<dbReference type="eggNOG" id="COG1327">
    <property type="taxonomic scope" value="Bacteria"/>
</dbReference>
<dbReference type="HOGENOM" id="CLU_108412_0_0_0"/>
<dbReference type="Proteomes" id="UP000000445">
    <property type="component" value="Chromosome"/>
</dbReference>
<dbReference type="GO" id="GO:0005524">
    <property type="term" value="F:ATP binding"/>
    <property type="evidence" value="ECO:0007669"/>
    <property type="project" value="UniProtKB-KW"/>
</dbReference>
<dbReference type="GO" id="GO:0003677">
    <property type="term" value="F:DNA binding"/>
    <property type="evidence" value="ECO:0007669"/>
    <property type="project" value="UniProtKB-KW"/>
</dbReference>
<dbReference type="GO" id="GO:0008270">
    <property type="term" value="F:zinc ion binding"/>
    <property type="evidence" value="ECO:0007669"/>
    <property type="project" value="UniProtKB-UniRule"/>
</dbReference>
<dbReference type="GO" id="GO:0045892">
    <property type="term" value="P:negative regulation of DNA-templated transcription"/>
    <property type="evidence" value="ECO:0007669"/>
    <property type="project" value="UniProtKB-UniRule"/>
</dbReference>
<dbReference type="HAMAP" id="MF_00440">
    <property type="entry name" value="NrdR"/>
    <property type="match status" value="1"/>
</dbReference>
<dbReference type="InterPro" id="IPR005144">
    <property type="entry name" value="ATP-cone_dom"/>
</dbReference>
<dbReference type="InterPro" id="IPR055173">
    <property type="entry name" value="NrdR-like_N"/>
</dbReference>
<dbReference type="InterPro" id="IPR003796">
    <property type="entry name" value="RNR_NrdR-like"/>
</dbReference>
<dbReference type="NCBIfam" id="TIGR00244">
    <property type="entry name" value="transcriptional regulator NrdR"/>
    <property type="match status" value="1"/>
</dbReference>
<dbReference type="PANTHER" id="PTHR30455">
    <property type="entry name" value="TRANSCRIPTIONAL REPRESSOR NRDR"/>
    <property type="match status" value="1"/>
</dbReference>
<dbReference type="PANTHER" id="PTHR30455:SF2">
    <property type="entry name" value="TRANSCRIPTIONAL REPRESSOR NRDR"/>
    <property type="match status" value="1"/>
</dbReference>
<dbReference type="Pfam" id="PF03477">
    <property type="entry name" value="ATP-cone"/>
    <property type="match status" value="1"/>
</dbReference>
<dbReference type="Pfam" id="PF22811">
    <property type="entry name" value="Zn_ribbon_NrdR"/>
    <property type="match status" value="1"/>
</dbReference>
<dbReference type="PROSITE" id="PS51161">
    <property type="entry name" value="ATP_CONE"/>
    <property type="match status" value="1"/>
</dbReference>
<accession>B9K7Y8</accession>
<feature type="chain" id="PRO_1000191827" description="Transcriptional repressor NrdR">
    <location>
        <begin position="1"/>
        <end position="156"/>
    </location>
</feature>
<feature type="domain" description="ATP-cone" evidence="1">
    <location>
        <begin position="49"/>
        <end position="139"/>
    </location>
</feature>
<feature type="zinc finger region" evidence="1">
    <location>
        <begin position="3"/>
        <end position="34"/>
    </location>
</feature>
<reference key="1">
    <citation type="submission" date="2007-11" db="EMBL/GenBank/DDBJ databases">
        <title>The genome sequence of the hyperthermophilic bacterium Thermotoga neapolitana.</title>
        <authorList>
            <person name="Lim S.K."/>
            <person name="Kim J.S."/>
            <person name="Cha S.H."/>
            <person name="Park B.C."/>
            <person name="Lee D.S."/>
            <person name="Tae H.S."/>
            <person name="Kim S.-J."/>
            <person name="Kim J.J."/>
            <person name="Park K.J."/>
            <person name="Lee S.Y."/>
        </authorList>
    </citation>
    <scope>NUCLEOTIDE SEQUENCE [LARGE SCALE GENOMIC DNA]</scope>
    <source>
        <strain>ATCC 49049 / DSM 4359 / NBRC 107923 / NS-E</strain>
    </source>
</reference>
<evidence type="ECO:0000255" key="1">
    <source>
        <dbReference type="HAMAP-Rule" id="MF_00440"/>
    </source>
</evidence>
<protein>
    <recommendedName>
        <fullName evidence="1">Transcriptional repressor NrdR</fullName>
    </recommendedName>
</protein>